<gene>
    <name evidence="3 6" type="primary">memo-1</name>
    <name evidence="6" type="synonym">tag-253</name>
    <name evidence="6" type="ORF">C37C3.8</name>
</gene>
<name>MEMO1_CAEEL</name>
<feature type="chain" id="PRO_0000134396" description="Protein memo-1 homolog" evidence="4">
    <location>
        <begin position="1"/>
        <end position="350"/>
    </location>
</feature>
<feature type="splice variant" id="VSP_007326" description="In isoform a." evidence="4">
    <location>
        <begin position="1"/>
        <end position="48"/>
    </location>
</feature>
<accession>Q22915</accession>
<accession>Q8MPV4</accession>
<evidence type="ECO:0000250" key="1">
    <source>
        <dbReference type="UniProtKB" id="Q9Y316"/>
    </source>
</evidence>
<evidence type="ECO:0000269" key="2">
    <source>
    </source>
</evidence>
<evidence type="ECO:0000303" key="3">
    <source>
    </source>
</evidence>
<evidence type="ECO:0000305" key="4"/>
<evidence type="ECO:0000312" key="5">
    <source>
        <dbReference type="WormBase" id="C37C3.8a"/>
    </source>
</evidence>
<evidence type="ECO:0000312" key="6">
    <source>
        <dbReference type="WormBase" id="C37C3.8b"/>
    </source>
</evidence>
<keyword id="KW-0025">Alternative splicing</keyword>
<keyword id="KW-1185">Reference proteome</keyword>
<organism>
    <name type="scientific">Caenorhabditis elegans</name>
    <dbReference type="NCBI Taxonomy" id="6239"/>
    <lineage>
        <taxon>Eukaryota</taxon>
        <taxon>Metazoa</taxon>
        <taxon>Ecdysozoa</taxon>
        <taxon>Nematoda</taxon>
        <taxon>Chromadorea</taxon>
        <taxon>Rhabditida</taxon>
        <taxon>Rhabditina</taxon>
        <taxon>Rhabditomorpha</taxon>
        <taxon>Rhabditoidea</taxon>
        <taxon>Rhabditidae</taxon>
        <taxon>Peloderinae</taxon>
        <taxon>Caenorhabditis</taxon>
    </lineage>
</organism>
<protein>
    <recommendedName>
        <fullName evidence="1">Protein memo-1 homolog</fullName>
    </recommendedName>
    <alternativeName>
        <fullName evidence="1">Mediator of ErbB2-driven cell motility 1 homolog</fullName>
        <shortName evidence="6">Mediator of cell motility 1 homolog</shortName>
    </alternativeName>
</protein>
<comment type="function">
    <text evidence="1 2">Plays a role in the oxidative stress response and the maintenance of longevity by regulating the interaction between GTPase rho-1 and oxidase bli-3 (PubMed:28085666). In turn, this serves to modulate bli-3 activity and the control of reactive oxygen species production (PubMed:28085666). May control cell migration by relaying extracellular chemotactic signals to the microtubule cytoskeleton (By similarity).</text>
</comment>
<comment type="subunit">
    <text evidence="2">Interacts with rho-1.</text>
</comment>
<comment type="alternative products">
    <event type="alternative splicing"/>
    <isoform>
        <id>Q22915-1</id>
        <name evidence="6">b</name>
        <sequence type="displayed"/>
    </isoform>
    <isoform>
        <id>Q22915-2</id>
        <name evidence="5">a</name>
        <sequence type="described" ref="VSP_007326"/>
    </isoform>
</comment>
<comment type="tissue specificity">
    <text evidence="2">Expressed in neuronal and non-neuronal cells in the head and tail, pharyngeal cells, spermatheca, distal tip cells, anchor cell and the intestine.</text>
</comment>
<comment type="developmental stage">
    <text evidence="2">Expressed from embryogenesis to adulthood.</text>
</comment>
<comment type="disruption phenotype">
    <text evidence="2">7-38% increase in lifespan compared to wild-type animals. Increased nuclear accumulation of the transcription factor skn-1. Increased resistance to oxidative stress as indicated by an increase in the expression of genes related to the oxidative stress response and activation of the p38 MAPK pathway. Increased reactive oxygen species production. Knockout with bli-3 RNAi rescues the enhanced longevity and increased reactive oxygen species production defects. Knockout with rho-1 RNAi suppresses reactive oxygen species induction and longevity in the memo-1 mutant. Double RNAi mediated knockdown with bli-3 suppresses the nuclear localization of skn-1 in the memo-1 single mutant. Double RNAi-mediated knockdown with rho-1 eliminates the resistance to oxidative stress in the memo-1 single mutant.</text>
</comment>
<comment type="similarity">
    <text evidence="4">Belongs to the MEMO1 family.</text>
</comment>
<sequence length="350" mass="39723">MSTWRASLGNTILVFCLKVFQNSRALFLRTFGLPFARYLNFILPSEFKMSLNGFGEHTRSASHAGSWYNANQRDLDRQLTKWLDNAGPRIGTARALISPHAGYSYCGETAAYAFKQVVSSAVERVFILGPSHVVALNGCAITTCSKYRTPLGDLIVDHKINEELRATRHFDLMDRRDEESEHSIEMQLPFIAKVMGSKRYTIVPVLVGSLPGSRQQTYGNIFAHYMEDPRNLFVISSDFCHWGERFSFSPYDRHSSIPIYEQITNMDKQGMSAIETLNPAAFNDYLKKTQNTICGRNPILIMLQAAEHFRISNNHTHEFRFLHYTQSNKVRSSVDSSVSYASGVLFVHPN</sequence>
<dbReference type="EMBL" id="FO080808">
    <property type="protein sequence ID" value="CCD66949.1"/>
    <property type="molecule type" value="Genomic_DNA"/>
</dbReference>
<dbReference type="EMBL" id="FO080808">
    <property type="protein sequence ID" value="CCD66950.1"/>
    <property type="molecule type" value="Genomic_DNA"/>
</dbReference>
<dbReference type="PIR" id="T34398">
    <property type="entry name" value="T34398"/>
</dbReference>
<dbReference type="RefSeq" id="NP_001367638.1">
    <molecule id="Q22915-2"/>
    <property type="nucleotide sequence ID" value="NM_001380698.1"/>
</dbReference>
<dbReference type="RefSeq" id="NP_001367639.1">
    <molecule id="Q22915-1"/>
    <property type="nucleotide sequence ID" value="NM_001380697.2"/>
</dbReference>
<dbReference type="RefSeq" id="NP_741570.2">
    <property type="nucleotide sequence ID" value="NM_171486.5"/>
</dbReference>
<dbReference type="RefSeq" id="NP_741571.1">
    <property type="nucleotide sequence ID" value="NM_171487.3"/>
</dbReference>
<dbReference type="SMR" id="Q22915"/>
<dbReference type="BioGRID" id="44206">
    <property type="interactions" value="4"/>
</dbReference>
<dbReference type="FunCoup" id="Q22915">
    <property type="interactions" value="2450"/>
</dbReference>
<dbReference type="STRING" id="6239.C37C3.8c.1"/>
<dbReference type="PaxDb" id="6239-C37C3.8b"/>
<dbReference type="PeptideAtlas" id="Q22915"/>
<dbReference type="EnsemblMetazoa" id="C37C3.8a.1">
    <molecule id="Q22915-2"/>
    <property type="protein sequence ID" value="C37C3.8a.1"/>
    <property type="gene ID" value="WBGene00016500"/>
</dbReference>
<dbReference type="EnsemblMetazoa" id="C37C3.8a.2">
    <molecule id="Q22915-2"/>
    <property type="protein sequence ID" value="C37C3.8a.2"/>
    <property type="gene ID" value="WBGene00016500"/>
</dbReference>
<dbReference type="EnsemblMetazoa" id="C37C3.8a.3">
    <molecule id="Q22915-2"/>
    <property type="protein sequence ID" value="C37C3.8a.3"/>
    <property type="gene ID" value="WBGene00016500"/>
</dbReference>
<dbReference type="EnsemblMetazoa" id="C37C3.8a.4">
    <molecule id="Q22915-2"/>
    <property type="protein sequence ID" value="C37C3.8a.4"/>
    <property type="gene ID" value="WBGene00016500"/>
</dbReference>
<dbReference type="EnsemblMetazoa" id="C37C3.8a.5">
    <molecule id="Q22915-2"/>
    <property type="protein sequence ID" value="C37C3.8a.5"/>
    <property type="gene ID" value="WBGene00016500"/>
</dbReference>
<dbReference type="EnsemblMetazoa" id="C37C3.8a.6">
    <molecule id="Q22915-2"/>
    <property type="protein sequence ID" value="C37C3.8a.6"/>
    <property type="gene ID" value="WBGene00016500"/>
</dbReference>
<dbReference type="EnsemblMetazoa" id="C37C3.8b.1">
    <molecule id="Q22915-1"/>
    <property type="protein sequence ID" value="C37C3.8b.1"/>
    <property type="gene ID" value="WBGene00016500"/>
</dbReference>
<dbReference type="GeneID" id="179163"/>
<dbReference type="UCSC" id="C37C3.8a.1">
    <molecule id="Q22915-1"/>
    <property type="organism name" value="c. elegans"/>
</dbReference>
<dbReference type="AGR" id="WB:WBGene00016500"/>
<dbReference type="WormBase" id="C37C3.8a">
    <molecule id="Q22915-2"/>
    <property type="protein sequence ID" value="CE06933"/>
    <property type="gene ID" value="WBGene00016500"/>
    <property type="gene designation" value="memo-1"/>
</dbReference>
<dbReference type="WormBase" id="C37C3.8b">
    <molecule id="Q22915-1"/>
    <property type="protein sequence ID" value="CE30736"/>
    <property type="gene ID" value="WBGene00016500"/>
    <property type="gene designation" value="memo-1"/>
</dbReference>
<dbReference type="eggNOG" id="KOG3086">
    <property type="taxonomic scope" value="Eukaryota"/>
</dbReference>
<dbReference type="GeneTree" id="ENSGT00390000006408"/>
<dbReference type="InParanoid" id="Q22915"/>
<dbReference type="OMA" id="EQEAQYG"/>
<dbReference type="PhylomeDB" id="Q22915"/>
<dbReference type="Reactome" id="R-CEL-6785631">
    <property type="pathway name" value="ERBB2 Regulates Cell Motility"/>
</dbReference>
<dbReference type="PRO" id="PR:Q22915"/>
<dbReference type="Proteomes" id="UP000001940">
    <property type="component" value="Chromosome V"/>
</dbReference>
<dbReference type="Bgee" id="WBGene00016500">
    <property type="expression patterns" value="Expressed in pharyngeal muscle cell (C elegans) and 3 other cell types or tissues"/>
</dbReference>
<dbReference type="ExpressionAtlas" id="Q22915">
    <property type="expression patterns" value="baseline and differential"/>
</dbReference>
<dbReference type="CDD" id="cd07361">
    <property type="entry name" value="MEMO_like"/>
    <property type="match status" value="1"/>
</dbReference>
<dbReference type="Gene3D" id="3.40.830.10">
    <property type="entry name" value="LigB-like"/>
    <property type="match status" value="1"/>
</dbReference>
<dbReference type="HAMAP" id="MF_00055">
    <property type="entry name" value="MEMO1"/>
    <property type="match status" value="1"/>
</dbReference>
<dbReference type="InterPro" id="IPR002737">
    <property type="entry name" value="MEMO1_fam"/>
</dbReference>
<dbReference type="NCBIfam" id="TIGR04336">
    <property type="entry name" value="AmmeMemoSam_B"/>
    <property type="match status" value="1"/>
</dbReference>
<dbReference type="PANTHER" id="PTHR11060">
    <property type="entry name" value="PROTEIN MEMO1"/>
    <property type="match status" value="1"/>
</dbReference>
<dbReference type="PANTHER" id="PTHR11060:SF0">
    <property type="entry name" value="PROTEIN MEMO1"/>
    <property type="match status" value="1"/>
</dbReference>
<dbReference type="Pfam" id="PF01875">
    <property type="entry name" value="Memo"/>
    <property type="match status" value="1"/>
</dbReference>
<reference key="1">
    <citation type="journal article" date="1998" name="Science">
        <title>Genome sequence of the nematode C. elegans: a platform for investigating biology.</title>
        <authorList>
            <consortium name="The C. elegans sequencing consortium"/>
        </authorList>
    </citation>
    <scope>NUCLEOTIDE SEQUENCE [LARGE SCALE GENOMIC DNA]</scope>
    <scope>ALTERNATIVE SPLICING</scope>
    <source>
        <strain>Bristol N2</strain>
    </source>
</reference>
<reference key="2">
    <citation type="journal article" date="2017" name="Elife">
        <title>NADPH oxidase-mediated redox signaling promotes oxidative stress resistance and longevity through memo-1 in C. elegans.</title>
        <authorList>
            <person name="Ewald C.Y."/>
            <person name="Hourihan J.M."/>
            <person name="Bland M.S."/>
            <person name="Obieglo C."/>
            <person name="Katic I."/>
            <person name="Moronetti Mazzeo L.E."/>
            <person name="Alcedo J."/>
            <person name="Blackwell T.K."/>
            <person name="Hynes N.E."/>
        </authorList>
    </citation>
    <scope>FUNCTION</scope>
    <scope>INTERACTION WITH RHO-1</scope>
    <scope>TISSUE SPECIFICITY</scope>
    <scope>DEVELOPMENTAL STAGE</scope>
    <scope>DISRUPTION PHENOTYPE</scope>
</reference>
<proteinExistence type="evidence at protein level"/>